<accession>P18193</accession>
<comment type="function">
    <text>Component of the outer layer of the flagella.</text>
</comment>
<comment type="subunit">
    <text>The flagellum consists of an outer layer composed of repeating units of FlaA around a core that contains several antigenically related polypeptides.</text>
</comment>
<comment type="subcellular location">
    <subcellularLocation>
        <location>Periplasmic flagellum</location>
    </subcellularLocation>
    <subcellularLocation>
        <location evidence="2 3">Periplasm</location>
    </subcellularLocation>
    <text evidence="2">Antibody labeling only occurs after mild detergent solubilization (PubMed:25825429).</text>
</comment>
<keyword id="KW-0975">Bacterial flagellum</keyword>
<keyword id="KW-0574">Periplasm</keyword>
<keyword id="KW-1185">Reference proteome</keyword>
<keyword id="KW-0732">Signal</keyword>
<feature type="signal peptide" evidence="1">
    <location>
        <begin position="1"/>
        <end position="20"/>
    </location>
</feature>
<feature type="chain" id="PRO_0000009354" description="Flagellar filament outer layer protein">
    <location>
        <begin position="21"/>
        <end position="350"/>
    </location>
</feature>
<evidence type="ECO:0000255" key="1"/>
<evidence type="ECO:0000269" key="2">
    <source>
    </source>
</evidence>
<evidence type="ECO:0000305" key="3">
    <source>
    </source>
</evidence>
<name>FLAA_TREPA</name>
<sequence>MKKAVVLSAVALLSGVCAVADESVLIDFAKLNADIMADKSGGMTHNRRTVLDYASLADTSYTDEQKALMRSSLAVAQWEVVLNSSARNPVAHAASRVIEAPVSEGAKSFAGERVLGVRVLFPTWDSNANAMIKPAFVIPAYEVMAQVDDQGNVQAPTEEEKASGKGRFEDGYGVVKNVGVLKSIAVNTYGMNYPHGLYVMMRDQDGEVHRYFMGYLLFDSWKELVWNNPSYISDVRSREVRLYPVYPASTPHVVFEGFMVTRDAAHAGGDYVGYFKDVKIIYDKAVLSTVRDFADEDLWGIQARREAERKRVEVARFGQQQVLRYIEQEKLATEVGFTPSGGAQRQEEQQ</sequence>
<proteinExistence type="inferred from homology"/>
<protein>
    <recommendedName>
        <fullName>Flagellar filament outer layer protein</fullName>
    </recommendedName>
    <alternativeName>
        <fullName>Sheath protein</fullName>
    </alternativeName>
</protein>
<gene>
    <name type="primary">flaA</name>
    <name type="ordered locus">TP_0249</name>
</gene>
<dbReference type="EMBL" id="M63142">
    <property type="protein sequence ID" value="AAA27477.1"/>
    <property type="molecule type" value="Genomic_DNA"/>
</dbReference>
<dbReference type="EMBL" id="AE000520">
    <property type="protein sequence ID" value="AAC65235.1"/>
    <property type="molecule type" value="Genomic_DNA"/>
</dbReference>
<dbReference type="EMBL" id="M26525">
    <property type="protein sequence ID" value="AAA27476.1"/>
    <property type="molecule type" value="Genomic_DNA"/>
</dbReference>
<dbReference type="PIR" id="D71348">
    <property type="entry name" value="D71348"/>
</dbReference>
<dbReference type="RefSeq" id="WP_010881697.1">
    <property type="nucleotide sequence ID" value="NC_021490.2"/>
</dbReference>
<dbReference type="IntAct" id="P18193">
    <property type="interactions" value="1"/>
</dbReference>
<dbReference type="STRING" id="243276.TP_0249"/>
<dbReference type="EnsemblBacteria" id="AAC65235">
    <property type="protein sequence ID" value="AAC65235"/>
    <property type="gene ID" value="TP_0249"/>
</dbReference>
<dbReference type="KEGG" id="tpa:TP_0249"/>
<dbReference type="KEGG" id="tpw:TPANIC_0249"/>
<dbReference type="eggNOG" id="ENOG50329D7">
    <property type="taxonomic scope" value="Bacteria"/>
</dbReference>
<dbReference type="HOGENOM" id="CLU_821088_0_0_12"/>
<dbReference type="OrthoDB" id="350240at2"/>
<dbReference type="Proteomes" id="UP000000811">
    <property type="component" value="Chromosome"/>
</dbReference>
<dbReference type="GO" id="GO:0030288">
    <property type="term" value="C:outer membrane-bounded periplasmic space"/>
    <property type="evidence" value="ECO:0007669"/>
    <property type="project" value="InterPro"/>
</dbReference>
<dbReference type="GO" id="GO:0055040">
    <property type="term" value="C:periplasmic flagellum"/>
    <property type="evidence" value="ECO:0007669"/>
    <property type="project" value="UniProtKB-SubCell"/>
</dbReference>
<dbReference type="GO" id="GO:0071973">
    <property type="term" value="P:bacterial-type flagellum-dependent cell motility"/>
    <property type="evidence" value="ECO:0007669"/>
    <property type="project" value="InterPro"/>
</dbReference>
<dbReference type="InterPro" id="IPR006714">
    <property type="entry name" value="FlaA"/>
</dbReference>
<dbReference type="InterPro" id="IPR016369">
    <property type="entry name" value="FlaA_Spirochaetes"/>
</dbReference>
<dbReference type="Pfam" id="PF04620">
    <property type="entry name" value="FlaA"/>
    <property type="match status" value="1"/>
</dbReference>
<dbReference type="PIRSF" id="PIRSF002892">
    <property type="entry name" value="Flagellin_A"/>
    <property type="match status" value="1"/>
</dbReference>
<organism>
    <name type="scientific">Treponema pallidum (strain Nichols)</name>
    <dbReference type="NCBI Taxonomy" id="243276"/>
    <lineage>
        <taxon>Bacteria</taxon>
        <taxon>Pseudomonadati</taxon>
        <taxon>Spirochaetota</taxon>
        <taxon>Spirochaetia</taxon>
        <taxon>Spirochaetales</taxon>
        <taxon>Treponemataceae</taxon>
        <taxon>Treponema</taxon>
    </lineage>
</organism>
<reference key="1">
    <citation type="journal article" date="1990" name="Infect. Immun.">
        <title>Expression in Escherichia coli of the 37-kilodalton endoflagellar sheath protein of Treponema pallidum by use of the polymerase chain reaction and a T7 expression system.</title>
        <authorList>
            <person name="Isaacs R.D."/>
            <person name="Radolf J.D."/>
        </authorList>
    </citation>
    <scope>NUCLEOTIDE SEQUENCE [GENOMIC DNA]</scope>
</reference>
<reference key="2">
    <citation type="journal article" date="1998" name="Science">
        <title>Complete genome sequence of Treponema pallidum, the syphilis spirochete.</title>
        <authorList>
            <person name="Fraser C.M."/>
            <person name="Norris S.J."/>
            <person name="Weinstock G.M."/>
            <person name="White O."/>
            <person name="Sutton G.G."/>
            <person name="Dodson R.J."/>
            <person name="Gwinn M.L."/>
            <person name="Hickey E.K."/>
            <person name="Clayton R.A."/>
            <person name="Ketchum K.A."/>
            <person name="Sodergren E."/>
            <person name="Hardham J.M."/>
            <person name="McLeod M.P."/>
            <person name="Salzberg S.L."/>
            <person name="Peterson J.D."/>
            <person name="Khalak H.G."/>
            <person name="Richardson D.L."/>
            <person name="Howell J.K."/>
            <person name="Chidambaram M."/>
            <person name="Utterback T.R."/>
            <person name="McDonald L.A."/>
            <person name="Artiach P."/>
            <person name="Bowman C."/>
            <person name="Cotton M.D."/>
            <person name="Fujii C."/>
            <person name="Garland S.A."/>
            <person name="Hatch B."/>
            <person name="Horst K."/>
            <person name="Roberts K.M."/>
            <person name="Sandusky M."/>
            <person name="Weidman J.F."/>
            <person name="Smith H.O."/>
            <person name="Venter J.C."/>
        </authorList>
    </citation>
    <scope>NUCLEOTIDE SEQUENCE [LARGE SCALE GENOMIC DNA]</scope>
    <source>
        <strain>Nichols</strain>
    </source>
</reference>
<reference key="3">
    <citation type="journal article" date="1989" name="Infect. Immun.">
        <title>Molecular cloning and DNA sequence analysis of the 37-kilodalton endoflagellar sheath protein gene of Treponema pallidum.</title>
        <authorList>
            <person name="Isaacs R.D."/>
            <person name="Hanke J.H."/>
            <person name="Guzman-Verduzco L.-M."/>
            <person name="Newport G."/>
            <person name="Agabian N."/>
            <person name="Norgard M.V."/>
            <person name="Lukehart S.A."/>
            <person name="Radolf J.D."/>
        </authorList>
    </citation>
    <scope>NUCLEOTIDE SEQUENCE [GENOMIC DNA] OF 30-350</scope>
    <source>
        <strain>Nichols</strain>
    </source>
</reference>
<reference key="4">
    <citation type="journal article" date="2005" name="J. Bacteriol.">
        <title>TP0453, a concealed outer membrane protein of Treponema pallidum, enhances membrane permeability.</title>
        <authorList>
            <person name="Hazlett K.R."/>
            <person name="Cox D.L."/>
            <person name="Decaffmeyer M."/>
            <person name="Bennett M.P."/>
            <person name="Desrosiers D.C."/>
            <person name="La Vake C.J."/>
            <person name="La Vake M.E."/>
            <person name="Bourell K.W."/>
            <person name="Robinson E.J."/>
            <person name="Brasseur R."/>
            <person name="Radolf J.D."/>
        </authorList>
    </citation>
    <scope>SUBCELLULAR LOCATION</scope>
</reference>
<reference key="5">
    <citation type="journal article" date="2015" name="J. Bacteriol.">
        <title>A homology model reveals novel structural features and an immunodominant surface loop/opsonic target in the Treponema pallidum BamA ortholog TP_0326.</title>
        <authorList>
            <person name="Luthra A."/>
            <person name="Anand A."/>
            <person name="Hawley K.L."/>
            <person name="LeDoyt M."/>
            <person name="La Vake C.J."/>
            <person name="Caimano M.J."/>
            <person name="Cruz A.R."/>
            <person name="Salazar J.C."/>
            <person name="Radolf J.D."/>
        </authorList>
    </citation>
    <scope>SUBCELLULAR LOCATION</scope>
    <source>
        <strain>Nichols-Farmington</strain>
    </source>
</reference>